<evidence type="ECO:0000250" key="1">
    <source>
        <dbReference type="UniProtKB" id="P0A6D3"/>
    </source>
</evidence>
<evidence type="ECO:0000250" key="2">
    <source>
        <dbReference type="UniProtKB" id="P11043"/>
    </source>
</evidence>
<evidence type="ECO:0000250" key="3">
    <source>
        <dbReference type="UniProtKB" id="P9WPY5"/>
    </source>
</evidence>
<evidence type="ECO:0000255" key="4"/>
<evidence type="ECO:0000305" key="5"/>
<reference key="1">
    <citation type="journal article" date="1990" name="Nucleic Acids Res.">
        <title>A Brassica napus gene encoding 5-enolpyruvylshikimate-3-phosphate synthase.</title>
        <authorList>
            <person name="Gasser C.S."/>
            <person name="Klee H.J."/>
        </authorList>
    </citation>
    <scope>NUCLEOTIDE SEQUENCE [GENOMIC DNA]</scope>
    <source>
        <strain>cv. Westar</strain>
    </source>
</reference>
<keyword id="KW-0028">Amino-acid biosynthesis</keyword>
<keyword id="KW-0057">Aromatic amino acid biosynthesis</keyword>
<keyword id="KW-0150">Chloroplast</keyword>
<keyword id="KW-0934">Plastid</keyword>
<keyword id="KW-0808">Transferase</keyword>
<keyword id="KW-0809">Transit peptide</keyword>
<accession>P17688</accession>
<name>AROA_BRANA</name>
<organism>
    <name type="scientific">Brassica napus</name>
    <name type="common">Rape</name>
    <dbReference type="NCBI Taxonomy" id="3708"/>
    <lineage>
        <taxon>Eukaryota</taxon>
        <taxon>Viridiplantae</taxon>
        <taxon>Streptophyta</taxon>
        <taxon>Embryophyta</taxon>
        <taxon>Tracheophyta</taxon>
        <taxon>Spermatophyta</taxon>
        <taxon>Magnoliopsida</taxon>
        <taxon>eudicotyledons</taxon>
        <taxon>Gunneridae</taxon>
        <taxon>Pentapetalae</taxon>
        <taxon>rosids</taxon>
        <taxon>malvids</taxon>
        <taxon>Brassicales</taxon>
        <taxon>Brassicaceae</taxon>
        <taxon>Brassiceae</taxon>
        <taxon>Brassica</taxon>
    </lineage>
</organism>
<dbReference type="EC" id="2.5.1.19" evidence="2"/>
<dbReference type="EMBL" id="X51475">
    <property type="protein sequence ID" value="CAA35839.1"/>
    <property type="molecule type" value="Genomic_DNA"/>
</dbReference>
<dbReference type="PIR" id="S12744">
    <property type="entry name" value="S12744"/>
</dbReference>
<dbReference type="RefSeq" id="NP_001412465.1">
    <property type="nucleotide sequence ID" value="NM_001425536.1"/>
</dbReference>
<dbReference type="SMR" id="P17688"/>
<dbReference type="GeneID" id="106371206"/>
<dbReference type="OrthoDB" id="197068at2759"/>
<dbReference type="UniPathway" id="UPA00053">
    <property type="reaction ID" value="UER00089"/>
</dbReference>
<dbReference type="GO" id="GO:0009507">
    <property type="term" value="C:chloroplast"/>
    <property type="evidence" value="ECO:0007669"/>
    <property type="project" value="UniProtKB-SubCell"/>
</dbReference>
<dbReference type="GO" id="GO:0003866">
    <property type="term" value="F:3-phosphoshikimate 1-carboxyvinyltransferase activity"/>
    <property type="evidence" value="ECO:0007669"/>
    <property type="project" value="UniProtKB-EC"/>
</dbReference>
<dbReference type="GO" id="GO:0008652">
    <property type="term" value="P:amino acid biosynthetic process"/>
    <property type="evidence" value="ECO:0007669"/>
    <property type="project" value="UniProtKB-KW"/>
</dbReference>
<dbReference type="GO" id="GO:0009073">
    <property type="term" value="P:aromatic amino acid family biosynthetic process"/>
    <property type="evidence" value="ECO:0007669"/>
    <property type="project" value="UniProtKB-KW"/>
</dbReference>
<dbReference type="GO" id="GO:0009423">
    <property type="term" value="P:chorismate biosynthetic process"/>
    <property type="evidence" value="ECO:0007669"/>
    <property type="project" value="UniProtKB-UniPathway"/>
</dbReference>
<dbReference type="CDD" id="cd01556">
    <property type="entry name" value="EPSP_synthase"/>
    <property type="match status" value="1"/>
</dbReference>
<dbReference type="FunFam" id="3.65.10.10:FF:000004">
    <property type="entry name" value="3-phosphoshikimate 1-carboxyvinyltransferase"/>
    <property type="match status" value="1"/>
</dbReference>
<dbReference type="FunFam" id="3.65.10.10:FF:000009">
    <property type="entry name" value="3-phosphoshikimate 1-carboxyvinyltransferase"/>
    <property type="match status" value="1"/>
</dbReference>
<dbReference type="Gene3D" id="3.65.10.10">
    <property type="entry name" value="Enolpyruvate transferase domain"/>
    <property type="match status" value="2"/>
</dbReference>
<dbReference type="HAMAP" id="MF_00210">
    <property type="entry name" value="EPSP_synth"/>
    <property type="match status" value="1"/>
</dbReference>
<dbReference type="InterPro" id="IPR001986">
    <property type="entry name" value="Enolpyruvate_Tfrase_dom"/>
</dbReference>
<dbReference type="InterPro" id="IPR036968">
    <property type="entry name" value="Enolpyruvate_Tfrase_sf"/>
</dbReference>
<dbReference type="InterPro" id="IPR006264">
    <property type="entry name" value="EPSP_synthase"/>
</dbReference>
<dbReference type="InterPro" id="IPR023193">
    <property type="entry name" value="EPSP_synthase_CS"/>
</dbReference>
<dbReference type="InterPro" id="IPR013792">
    <property type="entry name" value="RNA3'P_cycl/enolpyr_Trfase_a/b"/>
</dbReference>
<dbReference type="NCBIfam" id="TIGR01356">
    <property type="entry name" value="aroA"/>
    <property type="match status" value="1"/>
</dbReference>
<dbReference type="PANTHER" id="PTHR21090:SF30">
    <property type="entry name" value="3-PHOSPHOSHIKIMATE 1-CARBOXYVINYLTRANSFERASE"/>
    <property type="match status" value="1"/>
</dbReference>
<dbReference type="PANTHER" id="PTHR21090">
    <property type="entry name" value="AROM/DEHYDROQUINATE SYNTHASE"/>
    <property type="match status" value="1"/>
</dbReference>
<dbReference type="Pfam" id="PF00275">
    <property type="entry name" value="EPSP_synthase"/>
    <property type="match status" value="1"/>
</dbReference>
<dbReference type="SUPFAM" id="SSF55205">
    <property type="entry name" value="EPT/RTPC-like"/>
    <property type="match status" value="1"/>
</dbReference>
<dbReference type="PROSITE" id="PS00104">
    <property type="entry name" value="EPSP_SYNTHASE_1"/>
    <property type="match status" value="1"/>
</dbReference>
<dbReference type="PROSITE" id="PS00885">
    <property type="entry name" value="EPSP_SYNTHASE_2"/>
    <property type="match status" value="1"/>
</dbReference>
<proteinExistence type="inferred from homology"/>
<sequence>MAQSSRICHGVQNPCVIISNLSKSNQNKSPFSVSLKTHQPRASSWGLKKSGTMLNGSVIRPVKVTASVSTSEKASEIVLQPIREISGLIKLPGSKSLSNRILLLAALSEGTTVVDNLLNSDDINYMLDALKKLGLNVERDSVNNRAVVEGCGGIFPASLDSKSDIELYLGNAGTAMRPLTAAVTAAGGNASYVLDGVPRMRERPIGDLVVGLKQLGADVECTLGTNCPPVRVNANGGLPGGKVKLSGSISSQYLTALLMAAPLALGDVEIEIIDKLISVPYVEMTLKLMERFGVSAEHSDSWDRFFVKGGQKYKSPGNAYVEGDASSASYFLAGAAITGETVTVEGCGTTSLQGDVKFAEVLEKMGCKVSWTENSVTVTGPSRDAFGMRHLRAVDVNMNKMPDVAMTLAVVALFADGPTTIRDVASWRVKETERMIAICTELRKLGATVEEGSDYCVITPPAKVKPAEIDTYDDHRMAMAFSLAACADVPVTIKDPGCTRKTFPDYFQVLESITKH</sequence>
<feature type="transit peptide" description="Chloroplast" evidence="4">
    <location>
        <begin position="1"/>
        <end position="72"/>
    </location>
</feature>
<feature type="chain" id="PRO_0000002288" description="3-phosphoshikimate 1-carboxyvinyltransferase, chloroplastic">
    <location>
        <begin position="73"/>
        <end position="516"/>
    </location>
</feature>
<feature type="active site" description="Proton acceptor" evidence="1">
    <location>
        <position position="403"/>
    </location>
</feature>
<feature type="binding site" evidence="1">
    <location>
        <position position="95"/>
    </location>
    <ligand>
        <name>3-phosphoshikimate</name>
        <dbReference type="ChEBI" id="CHEBI:145989"/>
    </ligand>
</feature>
<feature type="binding site" evidence="3">
    <location>
        <position position="95"/>
    </location>
    <ligand>
        <name>phosphoenolpyruvate</name>
        <dbReference type="ChEBI" id="CHEBI:58702"/>
    </ligand>
</feature>
<feature type="binding site" evidence="1">
    <location>
        <position position="96"/>
    </location>
    <ligand>
        <name>3-phosphoshikimate</name>
        <dbReference type="ChEBI" id="CHEBI:145989"/>
    </ligand>
</feature>
<feature type="binding site" evidence="1">
    <location>
        <position position="100"/>
    </location>
    <ligand>
        <name>3-phosphoshikimate</name>
        <dbReference type="ChEBI" id="CHEBI:145989"/>
    </ligand>
</feature>
<feature type="binding site" evidence="3">
    <location>
        <position position="173"/>
    </location>
    <ligand>
        <name>phosphoenolpyruvate</name>
        <dbReference type="ChEBI" id="CHEBI:58702"/>
    </ligand>
</feature>
<feature type="binding site" evidence="3">
    <location>
        <position position="203"/>
    </location>
    <ligand>
        <name>phosphoenolpyruvate</name>
        <dbReference type="ChEBI" id="CHEBI:58702"/>
    </ligand>
</feature>
<feature type="binding site" evidence="1">
    <location>
        <position position="250"/>
    </location>
    <ligand>
        <name>3-phosphoshikimate</name>
        <dbReference type="ChEBI" id="CHEBI:145989"/>
    </ligand>
</feature>
<feature type="binding site" evidence="1">
    <location>
        <position position="251"/>
    </location>
    <ligand>
        <name>3-phosphoshikimate</name>
        <dbReference type="ChEBI" id="CHEBI:145989"/>
    </ligand>
</feature>
<feature type="binding site" evidence="1">
    <location>
        <position position="252"/>
    </location>
    <ligand>
        <name>3-phosphoshikimate</name>
        <dbReference type="ChEBI" id="CHEBI:145989"/>
    </ligand>
</feature>
<feature type="binding site" evidence="3">
    <location>
        <position position="252"/>
    </location>
    <ligand>
        <name>phosphoenolpyruvate</name>
        <dbReference type="ChEBI" id="CHEBI:58702"/>
    </ligand>
</feature>
<feature type="binding site" evidence="1">
    <location>
        <position position="278"/>
    </location>
    <ligand>
        <name>3-phosphoshikimate</name>
        <dbReference type="ChEBI" id="CHEBI:145989"/>
    </ligand>
</feature>
<feature type="binding site" evidence="1">
    <location>
        <position position="403"/>
    </location>
    <ligand>
        <name>3-phosphoshikimate</name>
        <dbReference type="ChEBI" id="CHEBI:145989"/>
    </ligand>
</feature>
<feature type="binding site" evidence="1">
    <location>
        <position position="430"/>
    </location>
    <ligand>
        <name>3-phosphoshikimate</name>
        <dbReference type="ChEBI" id="CHEBI:145989"/>
    </ligand>
</feature>
<feature type="binding site" evidence="3">
    <location>
        <position position="434"/>
    </location>
    <ligand>
        <name>phosphoenolpyruvate</name>
        <dbReference type="ChEBI" id="CHEBI:58702"/>
    </ligand>
</feature>
<feature type="binding site" evidence="3">
    <location>
        <position position="476"/>
    </location>
    <ligand>
        <name>phosphoenolpyruvate</name>
        <dbReference type="ChEBI" id="CHEBI:58702"/>
    </ligand>
</feature>
<feature type="binding site" evidence="3">
    <location>
        <position position="501"/>
    </location>
    <ligand>
        <name>phosphoenolpyruvate</name>
        <dbReference type="ChEBI" id="CHEBI:58702"/>
    </ligand>
</feature>
<comment type="function">
    <text evidence="2">Catalyzes the transfer of the enolpyruvyl moiety of phosphoenolpyruvate (PEP) to the 5-hydroxyl of shikimate-3-phosphate (S3P) to produce enolpyruvyl shikimate-3-phosphate and inorganic phosphate.</text>
</comment>
<comment type="catalytic activity">
    <reaction evidence="2">
        <text>3-phosphoshikimate + phosphoenolpyruvate = 5-O-(1-carboxyvinyl)-3-phosphoshikimate + phosphate</text>
        <dbReference type="Rhea" id="RHEA:21256"/>
        <dbReference type="ChEBI" id="CHEBI:43474"/>
        <dbReference type="ChEBI" id="CHEBI:57701"/>
        <dbReference type="ChEBI" id="CHEBI:58702"/>
        <dbReference type="ChEBI" id="CHEBI:145989"/>
        <dbReference type="EC" id="2.5.1.19"/>
    </reaction>
    <physiologicalReaction direction="left-to-right" evidence="2">
        <dbReference type="Rhea" id="RHEA:21257"/>
    </physiologicalReaction>
</comment>
<comment type="pathway">
    <text evidence="2">Metabolic intermediate biosynthesis; chorismate biosynthesis; chorismate from D-erythrose 4-phosphate and phosphoenolpyruvate: step 6/7.</text>
</comment>
<comment type="subcellular location">
    <subcellularLocation>
        <location>Plastid</location>
        <location>Chloroplast</location>
    </subcellularLocation>
</comment>
<comment type="miscellaneous">
    <text>This enzyme is the target of the potent, broad-spectrum herbicide, glyphosate [n-(phosphonomethyl)glycine]. Overproduction of EPSP leads to glyphosate tolerance.</text>
</comment>
<comment type="similarity">
    <text evidence="5">Belongs to the EPSP synthase family.</text>
</comment>
<protein>
    <recommendedName>
        <fullName>3-phosphoshikimate 1-carboxyvinyltransferase, chloroplastic</fullName>
        <ecNumber evidence="2">2.5.1.19</ecNumber>
    </recommendedName>
    <alternativeName>
        <fullName>5-enolpyruvylshikimate-3-phosphate synthase</fullName>
        <shortName>EPSP synthase</shortName>
    </alternativeName>
</protein>